<accession>Q9C0W8</accession>
<accession>O13625</accession>
<accession>O13626</accession>
<reference key="1">
    <citation type="journal article" date="2000" name="Yeast">
        <title>A 38 kb segment containing the cdc2 gene from the left arm of fission yeast chromosome II: sequence analysis and characterization of the genomic DNA and cDNAs encoded on the segment.</title>
        <authorList>
            <person name="Machida M."/>
            <person name="Yamazaki S."/>
            <person name="Kunihiro S."/>
            <person name="Tanaka T."/>
            <person name="Kushida N."/>
            <person name="Jinno K."/>
            <person name="Haikawa Y."/>
            <person name="Yamazaki J."/>
            <person name="Yamamoto S."/>
            <person name="Sekine M."/>
            <person name="Oguchi A."/>
            <person name="Nagai Y."/>
            <person name="Sakai M."/>
            <person name="Aoki K."/>
            <person name="Ogura K."/>
            <person name="Kudoh Y."/>
            <person name="Kikuchi H."/>
            <person name="Zhang M.Q."/>
            <person name="Yanagida M."/>
        </authorList>
    </citation>
    <scope>NUCLEOTIDE SEQUENCE [LARGE SCALE GENOMIC DNA]</scope>
    <source>
        <strain>972 / ATCC 24843</strain>
    </source>
</reference>
<reference key="2">
    <citation type="journal article" date="2002" name="Nature">
        <title>The genome sequence of Schizosaccharomyces pombe.</title>
        <authorList>
            <person name="Wood V."/>
            <person name="Gwilliam R."/>
            <person name="Rajandream M.A."/>
            <person name="Lyne M.H."/>
            <person name="Lyne R."/>
            <person name="Stewart A."/>
            <person name="Sgouros J.G."/>
            <person name="Peat N."/>
            <person name="Hayles J."/>
            <person name="Baker S.G."/>
            <person name="Basham D."/>
            <person name="Bowman S."/>
            <person name="Brooks K."/>
            <person name="Brown D."/>
            <person name="Brown S."/>
            <person name="Chillingworth T."/>
            <person name="Churcher C.M."/>
            <person name="Collins M."/>
            <person name="Connor R."/>
            <person name="Cronin A."/>
            <person name="Davis P."/>
            <person name="Feltwell T."/>
            <person name="Fraser A."/>
            <person name="Gentles S."/>
            <person name="Goble A."/>
            <person name="Hamlin N."/>
            <person name="Harris D.E."/>
            <person name="Hidalgo J."/>
            <person name="Hodgson G."/>
            <person name="Holroyd S."/>
            <person name="Hornsby T."/>
            <person name="Howarth S."/>
            <person name="Huckle E.J."/>
            <person name="Hunt S."/>
            <person name="Jagels K."/>
            <person name="James K.D."/>
            <person name="Jones L."/>
            <person name="Jones M."/>
            <person name="Leather S."/>
            <person name="McDonald S."/>
            <person name="McLean J."/>
            <person name="Mooney P."/>
            <person name="Moule S."/>
            <person name="Mungall K.L."/>
            <person name="Murphy L.D."/>
            <person name="Niblett D."/>
            <person name="Odell C."/>
            <person name="Oliver K."/>
            <person name="O'Neil S."/>
            <person name="Pearson D."/>
            <person name="Quail M.A."/>
            <person name="Rabbinowitsch E."/>
            <person name="Rutherford K.M."/>
            <person name="Rutter S."/>
            <person name="Saunders D."/>
            <person name="Seeger K."/>
            <person name="Sharp S."/>
            <person name="Skelton J."/>
            <person name="Simmonds M.N."/>
            <person name="Squares R."/>
            <person name="Squares S."/>
            <person name="Stevens K."/>
            <person name="Taylor K."/>
            <person name="Taylor R.G."/>
            <person name="Tivey A."/>
            <person name="Walsh S.V."/>
            <person name="Warren T."/>
            <person name="Whitehead S."/>
            <person name="Woodward J.R."/>
            <person name="Volckaert G."/>
            <person name="Aert R."/>
            <person name="Robben J."/>
            <person name="Grymonprez B."/>
            <person name="Weltjens I."/>
            <person name="Vanstreels E."/>
            <person name="Rieger M."/>
            <person name="Schaefer M."/>
            <person name="Mueller-Auer S."/>
            <person name="Gabel C."/>
            <person name="Fuchs M."/>
            <person name="Duesterhoeft A."/>
            <person name="Fritzc C."/>
            <person name="Holzer E."/>
            <person name="Moestl D."/>
            <person name="Hilbert H."/>
            <person name="Borzym K."/>
            <person name="Langer I."/>
            <person name="Beck A."/>
            <person name="Lehrach H."/>
            <person name="Reinhardt R."/>
            <person name="Pohl T.M."/>
            <person name="Eger P."/>
            <person name="Zimmermann W."/>
            <person name="Wedler H."/>
            <person name="Wambutt R."/>
            <person name="Purnelle B."/>
            <person name="Goffeau A."/>
            <person name="Cadieu E."/>
            <person name="Dreano S."/>
            <person name="Gloux S."/>
            <person name="Lelaure V."/>
            <person name="Mottier S."/>
            <person name="Galibert F."/>
            <person name="Aves S.J."/>
            <person name="Xiang Z."/>
            <person name="Hunt C."/>
            <person name="Moore K."/>
            <person name="Hurst S.M."/>
            <person name="Lucas M."/>
            <person name="Rochet M."/>
            <person name="Gaillardin C."/>
            <person name="Tallada V.A."/>
            <person name="Garzon A."/>
            <person name="Thode G."/>
            <person name="Daga R.R."/>
            <person name="Cruzado L."/>
            <person name="Jimenez J."/>
            <person name="Sanchez M."/>
            <person name="del Rey F."/>
            <person name="Benito J."/>
            <person name="Dominguez A."/>
            <person name="Revuelta J.L."/>
            <person name="Moreno S."/>
            <person name="Armstrong J."/>
            <person name="Forsburg S.L."/>
            <person name="Cerutti L."/>
            <person name="Lowe T."/>
            <person name="McCombie W.R."/>
            <person name="Paulsen I."/>
            <person name="Potashkin J."/>
            <person name="Shpakovski G.V."/>
            <person name="Ussery D."/>
            <person name="Barrell B.G."/>
            <person name="Nurse P."/>
        </authorList>
    </citation>
    <scope>NUCLEOTIDE SEQUENCE [LARGE SCALE GENOMIC DNA]</scope>
    <source>
        <strain>972 / ATCC 24843</strain>
    </source>
</reference>
<name>TIP20_SCHPO</name>
<sequence length="678" mass="79407">MMSQQLIDFIDSRTRHPYKSDEVEKFQQEVNELQLPDPNSLPILSEEEKRQAREDAAFRRSSEGLEDAWLDSAIPADPTPIFRDTVELLCVYQSFVKKSASLDTVANFLDFSTDFSTLSTKKDETEIAPDCLHYIAELLFQKKEREVKEKWKNELTEKLKTLFNWPAINPNLKESSKFESFFGFVRSIQSFKDSETGLPLFMQVYITPYVNQFRYHFMSQKQTNVLSKPEWFFEFLLKVFRSNRSFYMLMRDIKFFPGVPPFFTFINLLNNVAKEKLTHIIKYDDYLVHLVHETLQYSVRLEQHFHYTQDPLIIFLFEQNGTYDKWLGLETQLSLTKLEDIKIASDAWELESDQSDDFSSAVPTKMTVRFRDMIETTFSVLQNLPSLDYQFNFWRSVQLKPMMQYVNWLEAFYESHESSSSIHLPGSLQTDKSKFDIAEVERMCKLYSNFKLLMDWLDDIEDEDVYIRIGHKMGSENYAAFYQVKPRLSTLTNGSFRMILRAVSQTLRPLLDNYSDLDTWVIKEQLPGAALLSTSVSAEIVGFQSRLKEIIALLQKLLIGSSQCEAIYQIGTLVESWMIKIVMTHQFSVRGGVQFAMDAMQIVLEFSDYPLLKFERLMSTVELLSLESGENKLIKKLIIEINQKNYDFIDEFFKTKEITLSYEDALGVLYRRVDAWKD</sequence>
<gene>
    <name type="primary">tip20</name>
    <name type="ORF">pi034</name>
    <name type="ORF">SPBC691.02c</name>
</gene>
<organism>
    <name type="scientific">Schizosaccharomyces pombe (strain 972 / ATCC 24843)</name>
    <name type="common">Fission yeast</name>
    <dbReference type="NCBI Taxonomy" id="284812"/>
    <lineage>
        <taxon>Eukaryota</taxon>
        <taxon>Fungi</taxon>
        <taxon>Dikarya</taxon>
        <taxon>Ascomycota</taxon>
        <taxon>Taphrinomycotina</taxon>
        <taxon>Schizosaccharomycetes</taxon>
        <taxon>Schizosaccharomycetales</taxon>
        <taxon>Schizosaccharomycetaceae</taxon>
        <taxon>Schizosaccharomyces</taxon>
    </lineage>
</organism>
<evidence type="ECO:0000250" key="1"/>
<evidence type="ECO:0000255" key="2">
    <source>
        <dbReference type="PROSITE-ProRule" id="PRU00717"/>
    </source>
</evidence>
<keyword id="KW-0256">Endoplasmic reticulum</keyword>
<keyword id="KW-0931">ER-Golgi transport</keyword>
<keyword id="KW-0472">Membrane</keyword>
<keyword id="KW-0653">Protein transport</keyword>
<keyword id="KW-1185">Reference proteome</keyword>
<keyword id="KW-0813">Transport</keyword>
<comment type="function">
    <text evidence="1">Required for protein transport between the Golgi and the endoplasmic reticulum. May contribute to tethering of coatomer-coated retrograde transport vesicles to the ER membrane through interaction with and stabilization of the SNARE complex (By similarity).</text>
</comment>
<comment type="subunit">
    <text evidence="1">Component of a peripheral membrane protein complex consisting of dsl1, sec39/dsl3 and tip20. Bound to a SNARE complex consisting of ufe1, use1, sec20 and sec22 or ykt6 through direct interaction of tip20 with sec20. Interacts with dsl1, sec39/dsl3 and the cytoplasmic domain of sec20 (By similarity).</text>
</comment>
<comment type="subcellular location">
    <subcellularLocation>
        <location evidence="1">Endoplasmic reticulum membrane</location>
        <topology evidence="1">Peripheral membrane protein</topology>
    </subcellularLocation>
</comment>
<feature type="chain" id="PRO_0000116852" description="Protein transport protein tip20">
    <location>
        <begin position="1"/>
        <end position="678"/>
    </location>
</feature>
<feature type="domain" description="RINT1/TIP20" evidence="2">
    <location>
        <begin position="99"/>
        <end position="678"/>
    </location>
</feature>
<protein>
    <recommendedName>
        <fullName>Protein transport protein tip20</fullName>
    </recommendedName>
</protein>
<dbReference type="EMBL" id="AB004536">
    <property type="protein sequence ID" value="BAA21413.1"/>
    <property type="molecule type" value="Genomic_DNA"/>
</dbReference>
<dbReference type="EMBL" id="AB004537">
    <property type="protein sequence ID" value="BAA21414.1"/>
    <property type="molecule type" value="Genomic_DNA"/>
</dbReference>
<dbReference type="EMBL" id="CU329671">
    <property type="protein sequence ID" value="CAC37363.1"/>
    <property type="molecule type" value="Genomic_DNA"/>
</dbReference>
<dbReference type="SMR" id="Q9C0W8"/>
<dbReference type="BioGRID" id="277596">
    <property type="interactions" value="4"/>
</dbReference>
<dbReference type="FunCoup" id="Q9C0W8">
    <property type="interactions" value="50"/>
</dbReference>
<dbReference type="IntAct" id="Q9C0W8">
    <property type="interactions" value="1"/>
</dbReference>
<dbReference type="STRING" id="284812.Q9C0W8"/>
<dbReference type="iPTMnet" id="Q9C0W8"/>
<dbReference type="SwissPalm" id="Q9C0W8"/>
<dbReference type="PaxDb" id="4896-SPBC691.02c.1"/>
<dbReference type="EnsemblFungi" id="SPBC691.02c.1">
    <property type="protein sequence ID" value="SPBC691.02c.1:pep"/>
    <property type="gene ID" value="SPBC691.02c"/>
</dbReference>
<dbReference type="KEGG" id="spo:2541081"/>
<dbReference type="PomBase" id="SPBC691.02c"/>
<dbReference type="VEuPathDB" id="FungiDB:SPBC691.02c"/>
<dbReference type="eggNOG" id="KOG2218">
    <property type="taxonomic scope" value="Eukaryota"/>
</dbReference>
<dbReference type="HOGENOM" id="CLU_406609_0_0_1"/>
<dbReference type="InParanoid" id="Q9C0W8"/>
<dbReference type="OMA" id="RMCKLYS"/>
<dbReference type="PhylomeDB" id="Q9C0W8"/>
<dbReference type="Reactome" id="R-SPO-6811434">
    <property type="pathway name" value="COPI-dependent Golgi-to-ER retrograde traffic"/>
</dbReference>
<dbReference type="PRO" id="PR:Q9C0W8"/>
<dbReference type="Proteomes" id="UP000002485">
    <property type="component" value="Chromosome II"/>
</dbReference>
<dbReference type="GO" id="GO:0005829">
    <property type="term" value="C:cytosol"/>
    <property type="evidence" value="ECO:0007005"/>
    <property type="project" value="PomBase"/>
</dbReference>
<dbReference type="GO" id="GO:0070939">
    <property type="term" value="C:Dsl1/NZR complex"/>
    <property type="evidence" value="ECO:0000318"/>
    <property type="project" value="GO_Central"/>
</dbReference>
<dbReference type="GO" id="GO:0005789">
    <property type="term" value="C:endoplasmic reticulum membrane"/>
    <property type="evidence" value="ECO:0007669"/>
    <property type="project" value="UniProtKB-SubCell"/>
</dbReference>
<dbReference type="GO" id="GO:0005634">
    <property type="term" value="C:nucleus"/>
    <property type="evidence" value="ECO:0000314"/>
    <property type="project" value="PomBase"/>
</dbReference>
<dbReference type="GO" id="GO:0006888">
    <property type="term" value="P:endoplasmic reticulum to Golgi vesicle-mediated transport"/>
    <property type="evidence" value="ECO:0007669"/>
    <property type="project" value="InterPro"/>
</dbReference>
<dbReference type="GO" id="GO:0015031">
    <property type="term" value="P:protein transport"/>
    <property type="evidence" value="ECO:0007669"/>
    <property type="project" value="UniProtKB-KW"/>
</dbReference>
<dbReference type="GO" id="GO:0060628">
    <property type="term" value="P:regulation of ER to Golgi vesicle-mediated transport"/>
    <property type="evidence" value="ECO:0000318"/>
    <property type="project" value="GO_Central"/>
</dbReference>
<dbReference type="GO" id="GO:0006890">
    <property type="term" value="P:retrograde vesicle-mediated transport, Golgi to endoplasmic reticulum"/>
    <property type="evidence" value="ECO:0000318"/>
    <property type="project" value="GO_Central"/>
</dbReference>
<dbReference type="Gene3D" id="1.20.58.670">
    <property type="entry name" value="Dsl1p vesicle tethering complex, Tip20p subunit, domain D"/>
    <property type="match status" value="1"/>
</dbReference>
<dbReference type="InterPro" id="IPR042044">
    <property type="entry name" value="EXOC6PINT-1/Sec15/Tip20_C_dom2"/>
</dbReference>
<dbReference type="InterPro" id="IPR007528">
    <property type="entry name" value="RINT1_Tip20"/>
</dbReference>
<dbReference type="PANTHER" id="PTHR13520:SF0">
    <property type="entry name" value="RAD50-INTERACTING PROTEIN 1"/>
    <property type="match status" value="1"/>
</dbReference>
<dbReference type="PANTHER" id="PTHR13520">
    <property type="entry name" value="RAD50-INTERACTING PROTEIN 1 RINT-1"/>
    <property type="match status" value="1"/>
</dbReference>
<dbReference type="Pfam" id="PF04437">
    <property type="entry name" value="RINT1_TIP1"/>
    <property type="match status" value="1"/>
</dbReference>
<dbReference type="PROSITE" id="PS51386">
    <property type="entry name" value="RINT1_TIP20"/>
    <property type="match status" value="1"/>
</dbReference>
<proteinExistence type="inferred from homology"/>